<accession>Q9KR70</accession>
<gene>
    <name type="ordered locus">VC_1773</name>
</gene>
<dbReference type="EMBL" id="AE003852">
    <property type="protein sequence ID" value="AAF94922.1"/>
    <property type="molecule type" value="Genomic_DNA"/>
</dbReference>
<dbReference type="PIR" id="B82159">
    <property type="entry name" value="B82159"/>
</dbReference>
<dbReference type="RefSeq" id="NP_231408.1">
    <property type="nucleotide sequence ID" value="NC_002505.1"/>
</dbReference>
<dbReference type="RefSeq" id="WP_001008007.1">
    <property type="nucleotide sequence ID" value="NZ_LT906614.1"/>
</dbReference>
<dbReference type="SMR" id="Q9KR70"/>
<dbReference type="STRING" id="243277.VC_1773"/>
<dbReference type="DNASU" id="2613653"/>
<dbReference type="EnsemblBacteria" id="AAF94922">
    <property type="protein sequence ID" value="AAF94922"/>
    <property type="gene ID" value="VC_1773"/>
</dbReference>
<dbReference type="KEGG" id="vch:VC_1773"/>
<dbReference type="PATRIC" id="fig|243277.26.peg.1693"/>
<dbReference type="eggNOG" id="COG3055">
    <property type="taxonomic scope" value="Bacteria"/>
</dbReference>
<dbReference type="HOGENOM" id="CLU_061535_0_0_6"/>
<dbReference type="Proteomes" id="UP000000584">
    <property type="component" value="Chromosome 1"/>
</dbReference>
<dbReference type="Gene3D" id="2.120.10.80">
    <property type="entry name" value="Kelch-type beta propeller"/>
    <property type="match status" value="2"/>
</dbReference>
<dbReference type="InterPro" id="IPR015915">
    <property type="entry name" value="Kelch-typ_b-propeller"/>
</dbReference>
<dbReference type="InterPro" id="IPR056734">
    <property type="entry name" value="NANM"/>
</dbReference>
<dbReference type="InterPro" id="IPR019936">
    <property type="entry name" value="NanM_proteobact"/>
</dbReference>
<dbReference type="NCBIfam" id="TIGR03547">
    <property type="entry name" value="muta_rot_YjhT"/>
    <property type="match status" value="1"/>
</dbReference>
<dbReference type="PANTHER" id="PTHR45632">
    <property type="entry name" value="LD33804P"/>
    <property type="match status" value="1"/>
</dbReference>
<dbReference type="Pfam" id="PF24996">
    <property type="entry name" value="NANM"/>
    <property type="match status" value="1"/>
</dbReference>
<dbReference type="SUPFAM" id="SSF117281">
    <property type="entry name" value="Kelch motif"/>
    <property type="match status" value="2"/>
</dbReference>
<proteinExistence type="predicted"/>
<sequence length="356" mass="38999">MAISFQLLPELPVGVKHGVGGIIGQKLYAGLGSSGNAFFVLDLKDMNSGWKSAADFPGIARNDAAYTVCGNKLYVFSGAGIEGNNSFPTVLMDGYVFDSQINQWKRLERTLPTGFLGASCCSLSPTEIIFFGGYDKDTFNNFLSEISKIDVTKEPNKYKELITIFMSQPIDNYNWNKNVWSFTPCNEHWSVVGENPFKPNCGSGIIHKNNVVTLIEGEVKPGLRSLETKRYLFKEGKLEYSDSSASIIDICKNHEGLAGHFFGEIDNKIIVIGGAYFIGSQDAFIKGNLYAHNGLIKHFSSNVWIFDGKSWENKCQLDAAGIAYGVSASNGKAMYVLGGENSNGDAMTRCLSLLMD</sequence>
<keyword id="KW-0880">Kelch repeat</keyword>
<keyword id="KW-1185">Reference proteome</keyword>
<keyword id="KW-0677">Repeat</keyword>
<reference key="1">
    <citation type="journal article" date="2000" name="Nature">
        <title>DNA sequence of both chromosomes of the cholera pathogen Vibrio cholerae.</title>
        <authorList>
            <person name="Heidelberg J.F."/>
            <person name="Eisen J.A."/>
            <person name="Nelson W.C."/>
            <person name="Clayton R.A."/>
            <person name="Gwinn M.L."/>
            <person name="Dodson R.J."/>
            <person name="Haft D.H."/>
            <person name="Hickey E.K."/>
            <person name="Peterson J.D."/>
            <person name="Umayam L.A."/>
            <person name="Gill S.R."/>
            <person name="Nelson K.E."/>
            <person name="Read T.D."/>
            <person name="Tettelin H."/>
            <person name="Richardson D.L."/>
            <person name="Ermolaeva M.D."/>
            <person name="Vamathevan J.J."/>
            <person name="Bass S."/>
            <person name="Qin H."/>
            <person name="Dragoi I."/>
            <person name="Sellers P."/>
            <person name="McDonald L.A."/>
            <person name="Utterback T.R."/>
            <person name="Fleischmann R.D."/>
            <person name="Nierman W.C."/>
            <person name="White O."/>
            <person name="Salzberg S.L."/>
            <person name="Smith H.O."/>
            <person name="Colwell R.R."/>
            <person name="Mekalanos J.J."/>
            <person name="Venter J.C."/>
            <person name="Fraser C.M."/>
        </authorList>
    </citation>
    <scope>NUCLEOTIDE SEQUENCE [LARGE SCALE GENOMIC DNA]</scope>
    <source>
        <strain>ATCC 39315 / El Tor Inaba N16961</strain>
    </source>
</reference>
<name>Y1773_VIBCH</name>
<organism>
    <name type="scientific">Vibrio cholerae serotype O1 (strain ATCC 39315 / El Tor Inaba N16961)</name>
    <dbReference type="NCBI Taxonomy" id="243277"/>
    <lineage>
        <taxon>Bacteria</taxon>
        <taxon>Pseudomonadati</taxon>
        <taxon>Pseudomonadota</taxon>
        <taxon>Gammaproteobacteria</taxon>
        <taxon>Vibrionales</taxon>
        <taxon>Vibrionaceae</taxon>
        <taxon>Vibrio</taxon>
    </lineage>
</organism>
<protein>
    <recommendedName>
        <fullName>Kelch domain-containing protein VC_1773</fullName>
    </recommendedName>
</protein>
<feature type="chain" id="PRO_0000119174" description="Kelch domain-containing protein VC_1773">
    <location>
        <begin position="1"/>
        <end position="356"/>
    </location>
</feature>
<feature type="repeat" description="Kelch 1">
    <location>
        <begin position="72"/>
        <end position="125"/>
    </location>
</feature>
<feature type="repeat" description="Kelch 2">
    <location>
        <begin position="163"/>
        <end position="210"/>
    </location>
</feature>
<feature type="repeat" description="Kelch 3">
    <location>
        <begin position="288"/>
        <end position="331"/>
    </location>
</feature>
<feature type="repeat" description="Kelch 4">
    <location>
        <begin position="333"/>
        <end position="355"/>
    </location>
</feature>